<organism>
    <name type="scientific">Leuconostoc mesenteroides subsp. mesenteroides (strain ATCC 8293 / DSM 20343 / BCRC 11652 / CCM 1803 / JCM 6124 / NCDO 523 / NBRC 100496 / NCIMB 8023 / NCTC 12954 / NRRL B-1118 / 37Y)</name>
    <dbReference type="NCBI Taxonomy" id="203120"/>
    <lineage>
        <taxon>Bacteria</taxon>
        <taxon>Bacillati</taxon>
        <taxon>Bacillota</taxon>
        <taxon>Bacilli</taxon>
        <taxon>Lactobacillales</taxon>
        <taxon>Lactobacillaceae</taxon>
        <taxon>Leuconostoc</taxon>
    </lineage>
</organism>
<sequence length="305" mass="35543">MSVILNNGLLKRESFVIGRFEVLEPTINILLVNLMPNRLQTEKQFTRLLSHLPINVRVTFAVPSEHKIRHDTDAIMTNYVTLNDIWHKKFDGMIVTGAPVDRMKFEQIDYWDEFRHLLEWRKTHVTESLFACWAAYGAGYAERNFPVKALSEKISGVFQASQIFKRHSLLKDLENISMPQSRYFTVPNFGVARRLKVAGDDILGAFILRDEHVNSTYITGHFEYDTETLENEYLRDIAIDPNTIKPKNYFYNNKPTNTWQTYAEKFFVNWGELLMEKMTSSRSTIPTLNQERNKLGLGTSQCKYL</sequence>
<protein>
    <recommendedName>
        <fullName evidence="1">Homoserine O-acetyltransferase</fullName>
        <shortName evidence="1 3">HAT</shortName>
        <ecNumber evidence="1 2">2.3.1.31</ecNumber>
    </recommendedName>
    <alternativeName>
        <fullName evidence="1">Homoserine transacetylase</fullName>
        <shortName evidence="1">HTA</shortName>
    </alternativeName>
</protein>
<gene>
    <name evidence="1 3" type="primary">metAA</name>
    <name evidence="4" type="ordered locus">LEUM_1806</name>
</gene>
<proteinExistence type="evidence at protein level"/>
<dbReference type="EC" id="2.3.1.31" evidence="1 2"/>
<dbReference type="EMBL" id="CP000414">
    <property type="protein sequence ID" value="ABJ62893.1"/>
    <property type="molecule type" value="Genomic_DNA"/>
</dbReference>
<dbReference type="RefSeq" id="WP_010284094.1">
    <property type="nucleotide sequence ID" value="NC_008531.1"/>
</dbReference>
<dbReference type="SMR" id="Q03V79"/>
<dbReference type="EnsemblBacteria" id="ABJ62893">
    <property type="protein sequence ID" value="ABJ62893"/>
    <property type="gene ID" value="LEUM_1806"/>
</dbReference>
<dbReference type="GeneID" id="29577301"/>
<dbReference type="KEGG" id="lme:LEUM_1806"/>
<dbReference type="eggNOG" id="COG1897">
    <property type="taxonomic scope" value="Bacteria"/>
</dbReference>
<dbReference type="HOGENOM" id="CLU_057851_0_0_9"/>
<dbReference type="UniPathway" id="UPA00051">
    <property type="reaction ID" value="UER00074"/>
</dbReference>
<dbReference type="Proteomes" id="UP000000362">
    <property type="component" value="Chromosome"/>
</dbReference>
<dbReference type="GO" id="GO:0005737">
    <property type="term" value="C:cytoplasm"/>
    <property type="evidence" value="ECO:0007669"/>
    <property type="project" value="UniProtKB-SubCell"/>
</dbReference>
<dbReference type="GO" id="GO:0004414">
    <property type="term" value="F:homoserine O-acetyltransferase activity"/>
    <property type="evidence" value="ECO:0007669"/>
    <property type="project" value="UniProtKB-EC"/>
</dbReference>
<dbReference type="GO" id="GO:0008899">
    <property type="term" value="F:homoserine O-succinyltransferase activity"/>
    <property type="evidence" value="ECO:0007669"/>
    <property type="project" value="UniProtKB-UniRule"/>
</dbReference>
<dbReference type="GO" id="GO:0009086">
    <property type="term" value="P:methionine biosynthetic process"/>
    <property type="evidence" value="ECO:0007669"/>
    <property type="project" value="UniProtKB-UniRule"/>
</dbReference>
<dbReference type="CDD" id="cd03131">
    <property type="entry name" value="GATase1_HTS"/>
    <property type="match status" value="1"/>
</dbReference>
<dbReference type="Gene3D" id="3.40.50.880">
    <property type="match status" value="1"/>
</dbReference>
<dbReference type="HAMAP" id="MF_00295">
    <property type="entry name" value="MetA_acyltransf"/>
    <property type="match status" value="1"/>
</dbReference>
<dbReference type="InterPro" id="IPR029062">
    <property type="entry name" value="Class_I_gatase-like"/>
</dbReference>
<dbReference type="InterPro" id="IPR033752">
    <property type="entry name" value="MetA_family"/>
</dbReference>
<dbReference type="PANTHER" id="PTHR20919">
    <property type="entry name" value="HOMOSERINE O-SUCCINYLTRANSFERASE"/>
    <property type="match status" value="1"/>
</dbReference>
<dbReference type="PANTHER" id="PTHR20919:SF0">
    <property type="entry name" value="HOMOSERINE O-SUCCINYLTRANSFERASE"/>
    <property type="match status" value="1"/>
</dbReference>
<dbReference type="Pfam" id="PF04204">
    <property type="entry name" value="HTS"/>
    <property type="match status" value="1"/>
</dbReference>
<dbReference type="PIRSF" id="PIRSF000450">
    <property type="entry name" value="H_ser_succinyltr"/>
    <property type="match status" value="1"/>
</dbReference>
<dbReference type="SUPFAM" id="SSF52317">
    <property type="entry name" value="Class I glutamine amidotransferase-like"/>
    <property type="match status" value="1"/>
</dbReference>
<comment type="function">
    <text evidence="1 2">Transfers an acetyl group from acetyl-CoA to L-homoserine, forming acetyl-L-homoserine.</text>
</comment>
<comment type="catalytic activity">
    <reaction evidence="1 2">
        <text>L-homoserine + acetyl-CoA = O-acetyl-L-homoserine + CoA</text>
        <dbReference type="Rhea" id="RHEA:13701"/>
        <dbReference type="ChEBI" id="CHEBI:57287"/>
        <dbReference type="ChEBI" id="CHEBI:57288"/>
        <dbReference type="ChEBI" id="CHEBI:57476"/>
        <dbReference type="ChEBI" id="CHEBI:57716"/>
        <dbReference type="EC" id="2.3.1.31"/>
    </reaction>
</comment>
<comment type="pathway">
    <text evidence="1">Amino-acid biosynthesis; L-methionine biosynthesis via de novo pathway; O-acetyl-L-homoserine from L-homoserine: step 1/1.</text>
</comment>
<comment type="subcellular location">
    <subcellularLocation>
        <location evidence="1">Cytoplasm</location>
    </subcellularLocation>
</comment>
<comment type="similarity">
    <text evidence="1">Belongs to the MetA family.</text>
</comment>
<evidence type="ECO:0000255" key="1">
    <source>
        <dbReference type="HAMAP-Rule" id="MF_00295"/>
    </source>
</evidence>
<evidence type="ECO:0000269" key="2">
    <source>
    </source>
</evidence>
<evidence type="ECO:0000303" key="3">
    <source>
    </source>
</evidence>
<evidence type="ECO:0000312" key="4">
    <source>
        <dbReference type="EMBL" id="ABJ62893.1"/>
    </source>
</evidence>
<keyword id="KW-0012">Acyltransferase</keyword>
<keyword id="KW-0028">Amino-acid biosynthesis</keyword>
<keyword id="KW-0963">Cytoplasm</keyword>
<keyword id="KW-0486">Methionine biosynthesis</keyword>
<keyword id="KW-1185">Reference proteome</keyword>
<keyword id="KW-0808">Transferase</keyword>
<feature type="chain" id="PRO_0000440343" description="Homoserine O-acetyltransferase">
    <location>
        <begin position="1"/>
        <end position="305"/>
    </location>
</feature>
<feature type="active site" description="Acyl-thioester intermediate" evidence="1">
    <location>
        <position position="132"/>
    </location>
</feature>
<feature type="active site" description="Proton acceptor" evidence="1">
    <location>
        <position position="221"/>
    </location>
</feature>
<feature type="active site" evidence="1">
    <location>
        <position position="223"/>
    </location>
</feature>
<feature type="binding site" evidence="1">
    <location>
        <position position="153"/>
    </location>
    <ligand>
        <name>substrate</name>
    </ligand>
</feature>
<feature type="binding site" evidence="1">
    <location>
        <position position="181"/>
    </location>
    <ligand>
        <name>substrate</name>
    </ligand>
</feature>
<feature type="binding site" evidence="1">
    <location>
        <position position="235"/>
    </location>
    <ligand>
        <name>substrate</name>
    </ligand>
</feature>
<feature type="site" description="Important for acyl-CoA specificity" evidence="1">
    <location>
        <position position="101"/>
    </location>
</feature>
<feature type="site" description="Important for substrate specificity" evidence="1">
    <location>
        <position position="181"/>
    </location>
</feature>
<name>METAA_LEUMM</name>
<reference key="1">
    <citation type="journal article" date="2006" name="Proc. Natl. Acad. Sci. U.S.A.">
        <title>Comparative genomics of the lactic acid bacteria.</title>
        <authorList>
            <person name="Makarova K.S."/>
            <person name="Slesarev A."/>
            <person name="Wolf Y.I."/>
            <person name="Sorokin A."/>
            <person name="Mirkin B."/>
            <person name="Koonin E.V."/>
            <person name="Pavlov A."/>
            <person name="Pavlova N."/>
            <person name="Karamychev V."/>
            <person name="Polouchine N."/>
            <person name="Shakhova V."/>
            <person name="Grigoriev I."/>
            <person name="Lou Y."/>
            <person name="Rohksar D."/>
            <person name="Lucas S."/>
            <person name="Huang K."/>
            <person name="Goodstein D.M."/>
            <person name="Hawkins T."/>
            <person name="Plengvidhya V."/>
            <person name="Welker D."/>
            <person name="Hughes J."/>
            <person name="Goh Y."/>
            <person name="Benson A."/>
            <person name="Baldwin K."/>
            <person name="Lee J.-H."/>
            <person name="Diaz-Muniz I."/>
            <person name="Dosti B."/>
            <person name="Smeianov V."/>
            <person name="Wechter W."/>
            <person name="Barabote R."/>
            <person name="Lorca G."/>
            <person name="Altermann E."/>
            <person name="Barrangou R."/>
            <person name="Ganesan B."/>
            <person name="Xie Y."/>
            <person name="Rawsthorne H."/>
            <person name="Tamir D."/>
            <person name="Parker C."/>
            <person name="Breidt F."/>
            <person name="Broadbent J.R."/>
            <person name="Hutkins R."/>
            <person name="O'Sullivan D."/>
            <person name="Steele J."/>
            <person name="Unlu G."/>
            <person name="Saier M.H. Jr."/>
            <person name="Klaenhammer T."/>
            <person name="Richardson P."/>
            <person name="Kozyavkin S."/>
            <person name="Weimer B.C."/>
            <person name="Mills D.A."/>
        </authorList>
    </citation>
    <scope>NUCLEOTIDE SEQUENCE [LARGE SCALE GENOMIC DNA]</scope>
    <source>
        <strain>ATCC 8293 / DSM 20343 / BCRC 11652 / CCM 1803 / JCM 6124 / NCDO 523 / NBRC 100496 / NCIMB 8023 / NCTC 12954 / NRRL B-1118 / 37Y</strain>
    </source>
</reference>
<reference key="2">
    <citation type="journal article" date="2017" name="Nat. Chem. Biol.">
        <title>Parallel evolution of non-homologous isofunctional enzymes in methionine biosynthesis.</title>
        <authorList>
            <person name="Bastard K."/>
            <person name="Perret A."/>
            <person name="Mariage A."/>
            <person name="Bessonnet T."/>
            <person name="Pinet-Turpault A."/>
            <person name="Petit J.L."/>
            <person name="Darii E."/>
            <person name="Bazire P."/>
            <person name="Vergne-Vaxelaire C."/>
            <person name="Brewee C."/>
            <person name="Debard A."/>
            <person name="Pellouin V."/>
            <person name="Besnard-Gonnet M."/>
            <person name="Artiguenave F."/>
            <person name="Medigue C."/>
            <person name="Vallenet D."/>
            <person name="Danchin A."/>
            <person name="Zaparucha A."/>
            <person name="Weissenbach J."/>
            <person name="Salanoubat M."/>
            <person name="de Berardinis V."/>
        </authorList>
    </citation>
    <scope>FUNCTION</scope>
    <scope>CATALYTIC ACTIVITY</scope>
</reference>
<accession>Q03V79</accession>